<name>ORF45_NPVAC</name>
<organism>
    <name type="scientific">Autographa californica nuclear polyhedrosis virus</name>
    <name type="common">AcMNPV</name>
    <dbReference type="NCBI Taxonomy" id="46015"/>
    <lineage>
        <taxon>Viruses</taxon>
        <taxon>Viruses incertae sedis</taxon>
        <taxon>Naldaviricetes</taxon>
        <taxon>Lefavirales</taxon>
        <taxon>Baculoviridae</taxon>
        <taxon>Alphabaculovirus</taxon>
        <taxon>Alphabaculovirus aucalifornicae</taxon>
    </lineage>
</organism>
<evidence type="ECO:0000269" key="1">
    <source>
    </source>
</evidence>
<keyword id="KW-1185">Reference proteome</keyword>
<organismHost>
    <name type="scientific">Lepidoptera</name>
    <name type="common">butterflies and moths</name>
    <dbReference type="NCBI Taxonomy" id="7088"/>
</organismHost>
<comment type="function">
    <text evidence="1">Plays a role in the expression of ORF41, which itself is required for late gene expression.</text>
</comment>
<sequence>MLPYEMVIAVLVYLSPAQILNLNLPFAYQKSVLFASNSAKVNERIRRRARDDNDDDPYFYYKQFIKINFLTKKIINVYNKTEKCIRATFDGRYVVTRDVLMCFVNKSYMKQLLREVDTRITLQQLVKMYSPEFGFYVNSKIMFVLTESVLASICLKHSFGKCEWLDKNIKTVCLQLRKICINNKQHSTCLSY</sequence>
<dbReference type="EMBL" id="L22858">
    <property type="protein sequence ID" value="AAA66675.1"/>
    <property type="molecule type" value="Genomic_DNA"/>
</dbReference>
<dbReference type="PIR" id="E72855">
    <property type="entry name" value="E72855"/>
</dbReference>
<dbReference type="RefSeq" id="NP_054074.1">
    <property type="nucleotide sequence ID" value="NC_001623.1"/>
</dbReference>
<dbReference type="GeneID" id="1403877"/>
<dbReference type="KEGG" id="vg:1403877"/>
<dbReference type="OrthoDB" id="16272at10239"/>
<dbReference type="Proteomes" id="UP000008292">
    <property type="component" value="Segment"/>
</dbReference>
<dbReference type="InterPro" id="IPR035125">
    <property type="entry name" value="ORF45"/>
</dbReference>
<dbReference type="Pfam" id="PF17620">
    <property type="entry name" value="ORF45"/>
    <property type="match status" value="1"/>
</dbReference>
<accession>P41450</accession>
<protein>
    <recommendedName>
        <fullName>Protein ORF45</fullName>
    </recommendedName>
</protein>
<proteinExistence type="predicted"/>
<reference key="1">
    <citation type="journal article" date="1994" name="Virology">
        <title>The complete DNA sequence of Autographa californica nuclear polyhedrosis virus.</title>
        <authorList>
            <person name="Ayres M.D."/>
            <person name="Howard S.C."/>
            <person name="Kuzio J."/>
            <person name="Lopez-Ferber M."/>
            <person name="Possee R.D."/>
        </authorList>
    </citation>
    <scope>NUCLEOTIDE SEQUENCE [LARGE SCALE GENOMIC DNA]</scope>
    <source>
        <strain>C6</strain>
    </source>
</reference>
<reference key="2">
    <citation type="journal article" date="1999" name="Virology">
        <title>Identification of additional genes that influence baculovirus late gene expression.</title>
        <authorList>
            <person name="Li L."/>
            <person name="Harwood S.H."/>
            <person name="Rohrmann G.F."/>
        </authorList>
    </citation>
    <scope>FUNCTION</scope>
</reference>
<feature type="chain" id="PRO_0000132981" description="Protein ORF45">
    <location>
        <begin position="1"/>
        <end position="192"/>
    </location>
</feature>